<feature type="chain" id="PRO_0000226950" description="Translation initiation factor IF-1, chloroplastic">
    <location>
        <begin position="1"/>
        <end position="77"/>
    </location>
</feature>
<feature type="domain" description="S1-like" evidence="1">
    <location>
        <begin position="1"/>
        <end position="71"/>
    </location>
</feature>
<sequence>MKEQKWIHEGLITESLPNGMFRVRLDNEDMILGYVSGKIRRSFIRILPGDRVKIEVSRYDSTRGRIIYRLRNKDSKD</sequence>
<protein>
    <recommendedName>
        <fullName evidence="1">Translation initiation factor IF-1, chloroplastic</fullName>
    </recommendedName>
</protein>
<name>IF1C_LACSA</name>
<geneLocation type="chloroplast"/>
<evidence type="ECO:0000255" key="1">
    <source>
        <dbReference type="HAMAP-Rule" id="MF_00075"/>
    </source>
</evidence>
<accession>Q332U2</accession>
<accession>Q1KXI7</accession>
<reference key="1">
    <citation type="journal article" date="2006" name="Transgenic Res.">
        <title>Efficient and stable transformation of Lactuca sativa L. cv. Cisco (lettuce) plastids.</title>
        <authorList>
            <person name="Kanamoto H."/>
            <person name="Yamashita A."/>
            <person name="Asao H."/>
            <person name="Okumura S."/>
            <person name="Takase H."/>
            <person name="Hattori M."/>
            <person name="Yokota A."/>
            <person name="Tomizawa K."/>
        </authorList>
    </citation>
    <scope>NUCLEOTIDE SEQUENCE [LARGE SCALE GENOMIC DNA]</scope>
    <source>
        <strain>cv. Cisco</strain>
    </source>
</reference>
<reference key="2">
    <citation type="submission" date="2006-01" db="EMBL/GenBank/DDBJ databases">
        <title>A comparison of the first two published chloroplast genomes in Asteraceae: Lactuca and Helianthus.</title>
        <authorList>
            <person name="Timme R.E."/>
            <person name="Kuehl J.V."/>
            <person name="Boore J.L."/>
            <person name="Jansen R.K."/>
        </authorList>
    </citation>
    <scope>NUCLEOTIDE SEQUENCE [LARGE SCALE GENOMIC DNA]</scope>
    <source>
        <strain>cv. Salinas</strain>
    </source>
</reference>
<comment type="function">
    <text evidence="1">One of the essential components for the initiation of protein synthesis. Stabilizes the binding of IF-2 and IF-3 on the 30S subunit to which N-formylmethionyl-tRNA(fMet) subsequently binds. Helps modulate mRNA selection, yielding the 30S pre-initiation complex (PIC). Upon addition of the 50S ribosomal subunit IF-1, IF-2 and IF-3 are released leaving the mature 70S translation initiation complex.</text>
</comment>
<comment type="subunit">
    <text evidence="1">Component of the 30S ribosomal translation pre-initiation complex which assembles on the 30S ribosome in the order IF-2 and IF-3, IF-1 and N-formylmethionyl-tRNA(fMet); mRNA recruitment can occur at any time during PIC assembly.</text>
</comment>
<comment type="subcellular location">
    <subcellularLocation>
        <location evidence="1">Plastid</location>
        <location evidence="1">Chloroplast</location>
    </subcellularLocation>
</comment>
<comment type="similarity">
    <text evidence="1">Belongs to the IF-1 family.</text>
</comment>
<dbReference type="EMBL" id="AP007232">
    <property type="protein sequence ID" value="BAE47630.1"/>
    <property type="molecule type" value="Genomic_DNA"/>
</dbReference>
<dbReference type="EMBL" id="DQ383816">
    <property type="protein sequence ID" value="ABD47267.1"/>
    <property type="molecule type" value="Genomic_DNA"/>
</dbReference>
<dbReference type="RefSeq" id="YP_398363.1">
    <property type="nucleotide sequence ID" value="NC_007578.1"/>
</dbReference>
<dbReference type="SMR" id="Q332U2"/>
<dbReference type="GeneID" id="3772848"/>
<dbReference type="KEGG" id="lsv:3772848"/>
<dbReference type="OrthoDB" id="1714886at2759"/>
<dbReference type="GO" id="GO:0009507">
    <property type="term" value="C:chloroplast"/>
    <property type="evidence" value="ECO:0007669"/>
    <property type="project" value="UniProtKB-SubCell"/>
</dbReference>
<dbReference type="GO" id="GO:0043022">
    <property type="term" value="F:ribosome binding"/>
    <property type="evidence" value="ECO:0007669"/>
    <property type="project" value="UniProtKB-UniRule"/>
</dbReference>
<dbReference type="GO" id="GO:0019843">
    <property type="term" value="F:rRNA binding"/>
    <property type="evidence" value="ECO:0007669"/>
    <property type="project" value="UniProtKB-UniRule"/>
</dbReference>
<dbReference type="GO" id="GO:0003743">
    <property type="term" value="F:translation initiation factor activity"/>
    <property type="evidence" value="ECO:0007669"/>
    <property type="project" value="UniProtKB-UniRule"/>
</dbReference>
<dbReference type="CDD" id="cd04451">
    <property type="entry name" value="S1_IF1"/>
    <property type="match status" value="1"/>
</dbReference>
<dbReference type="FunFam" id="2.40.50.140:FF:000019">
    <property type="entry name" value="Translation initiation factor IF-1, chloroplastic"/>
    <property type="match status" value="1"/>
</dbReference>
<dbReference type="Gene3D" id="2.40.50.140">
    <property type="entry name" value="Nucleic acid-binding proteins"/>
    <property type="match status" value="1"/>
</dbReference>
<dbReference type="HAMAP" id="MF_00075">
    <property type="entry name" value="IF_1"/>
    <property type="match status" value="1"/>
</dbReference>
<dbReference type="InterPro" id="IPR012340">
    <property type="entry name" value="NA-bd_OB-fold"/>
</dbReference>
<dbReference type="InterPro" id="IPR006196">
    <property type="entry name" value="RNA-binding_domain_S1_IF1"/>
</dbReference>
<dbReference type="InterPro" id="IPR003029">
    <property type="entry name" value="S1_domain"/>
</dbReference>
<dbReference type="InterPro" id="IPR004368">
    <property type="entry name" value="TIF_IF1"/>
</dbReference>
<dbReference type="NCBIfam" id="TIGR00008">
    <property type="entry name" value="infA"/>
    <property type="match status" value="1"/>
</dbReference>
<dbReference type="PANTHER" id="PTHR33370">
    <property type="entry name" value="TRANSLATION INITIATION FACTOR IF-1, CHLOROPLASTIC"/>
    <property type="match status" value="1"/>
</dbReference>
<dbReference type="PANTHER" id="PTHR33370:SF1">
    <property type="entry name" value="TRANSLATION INITIATION FACTOR IF-1, CHLOROPLASTIC"/>
    <property type="match status" value="1"/>
</dbReference>
<dbReference type="Pfam" id="PF01176">
    <property type="entry name" value="eIF-1a"/>
    <property type="match status" value="1"/>
</dbReference>
<dbReference type="SMART" id="SM00316">
    <property type="entry name" value="S1"/>
    <property type="match status" value="1"/>
</dbReference>
<dbReference type="SUPFAM" id="SSF50249">
    <property type="entry name" value="Nucleic acid-binding proteins"/>
    <property type="match status" value="1"/>
</dbReference>
<dbReference type="PROSITE" id="PS50832">
    <property type="entry name" value="S1_IF1_TYPE"/>
    <property type="match status" value="1"/>
</dbReference>
<proteinExistence type="inferred from homology"/>
<keyword id="KW-0150">Chloroplast</keyword>
<keyword id="KW-0396">Initiation factor</keyword>
<keyword id="KW-0934">Plastid</keyword>
<keyword id="KW-0648">Protein biosynthesis</keyword>
<keyword id="KW-0694">RNA-binding</keyword>
<keyword id="KW-0699">rRNA-binding</keyword>
<organism>
    <name type="scientific">Lactuca sativa</name>
    <name type="common">Garden lettuce</name>
    <dbReference type="NCBI Taxonomy" id="4236"/>
    <lineage>
        <taxon>Eukaryota</taxon>
        <taxon>Viridiplantae</taxon>
        <taxon>Streptophyta</taxon>
        <taxon>Embryophyta</taxon>
        <taxon>Tracheophyta</taxon>
        <taxon>Spermatophyta</taxon>
        <taxon>Magnoliopsida</taxon>
        <taxon>eudicotyledons</taxon>
        <taxon>Gunneridae</taxon>
        <taxon>Pentapetalae</taxon>
        <taxon>asterids</taxon>
        <taxon>campanulids</taxon>
        <taxon>Asterales</taxon>
        <taxon>Asteraceae</taxon>
        <taxon>Cichorioideae</taxon>
        <taxon>Cichorieae</taxon>
        <taxon>Lactucinae</taxon>
        <taxon>Lactuca</taxon>
    </lineage>
</organism>
<gene>
    <name evidence="1" type="primary">infA</name>
</gene>